<feature type="chain" id="PRO_0000237878" description="Shikimate kinase 2">
    <location>
        <begin position="1"/>
        <end position="173"/>
    </location>
</feature>
<feature type="region of interest" description="LID domain">
    <location>
        <begin position="112"/>
        <end position="126"/>
    </location>
</feature>
<feature type="binding site" evidence="1">
    <location>
        <begin position="12"/>
        <end position="17"/>
    </location>
    <ligand>
        <name>ATP</name>
        <dbReference type="ChEBI" id="CHEBI:30616"/>
    </ligand>
</feature>
<feature type="binding site" evidence="1">
    <location>
        <position position="16"/>
    </location>
    <ligand>
        <name>Mg(2+)</name>
        <dbReference type="ChEBI" id="CHEBI:18420"/>
    </ligand>
</feature>
<feature type="binding site" evidence="1">
    <location>
        <position position="32"/>
    </location>
    <ligand>
        <name>Mg(2+)</name>
        <dbReference type="ChEBI" id="CHEBI:18420"/>
    </ligand>
</feature>
<feature type="binding site" evidence="1">
    <location>
        <position position="34"/>
    </location>
    <ligand>
        <name>substrate</name>
    </ligand>
</feature>
<feature type="binding site" evidence="1">
    <location>
        <position position="58"/>
    </location>
    <ligand>
        <name>substrate</name>
    </ligand>
</feature>
<feature type="binding site" evidence="1">
    <location>
        <position position="79"/>
    </location>
    <ligand>
        <name>substrate</name>
    </ligand>
</feature>
<feature type="binding site" evidence="1">
    <location>
        <position position="120"/>
    </location>
    <ligand>
        <name>ATP</name>
        <dbReference type="ChEBI" id="CHEBI:30616"/>
    </ligand>
</feature>
<feature type="binding site" evidence="1">
    <location>
        <position position="139"/>
    </location>
    <ligand>
        <name>substrate</name>
    </ligand>
</feature>
<feature type="binding site" evidence="1">
    <location>
        <position position="155"/>
    </location>
    <ligand>
        <name>ATP</name>
        <dbReference type="ChEBI" id="CHEBI:30616"/>
    </ligand>
</feature>
<gene>
    <name evidence="1" type="primary">aroL</name>
    <name type="ordered locus">ECA1103</name>
</gene>
<protein>
    <recommendedName>
        <fullName evidence="1">Shikimate kinase 2</fullName>
        <shortName evidence="1">SK 2</shortName>
        <ecNumber evidence="1">2.7.1.71</ecNumber>
    </recommendedName>
</protein>
<sequence length="173" mass="18835">MTHPIFMVGARGCGKTTVGHQLAQALGYDFVDTDLFMQQTTNMTVADVVAQEGWHGFRQRESLALQQVASNRCIVATGGGMVLAEANRRFMHDKGIVIYLHADAELLAQRLEENPQDNQRPTLTGRPIAEEMADVLAAREALYRGAAHHVIDASQTPDAIVVSVLKALRLSAA</sequence>
<proteinExistence type="inferred from homology"/>
<accession>Q6D872</accession>
<keyword id="KW-0028">Amino-acid biosynthesis</keyword>
<keyword id="KW-0057">Aromatic amino acid biosynthesis</keyword>
<keyword id="KW-0067">ATP-binding</keyword>
<keyword id="KW-0963">Cytoplasm</keyword>
<keyword id="KW-0418">Kinase</keyword>
<keyword id="KW-0460">Magnesium</keyword>
<keyword id="KW-0479">Metal-binding</keyword>
<keyword id="KW-0547">Nucleotide-binding</keyword>
<keyword id="KW-1185">Reference proteome</keyword>
<keyword id="KW-0808">Transferase</keyword>
<dbReference type="EC" id="2.7.1.71" evidence="1"/>
<dbReference type="EMBL" id="BX950851">
    <property type="protein sequence ID" value="CAG74013.1"/>
    <property type="molecule type" value="Genomic_DNA"/>
</dbReference>
<dbReference type="RefSeq" id="WP_011092700.1">
    <property type="nucleotide sequence ID" value="NC_004547.2"/>
</dbReference>
<dbReference type="SMR" id="Q6D872"/>
<dbReference type="STRING" id="218491.ECA1103"/>
<dbReference type="GeneID" id="57207917"/>
<dbReference type="KEGG" id="eca:ECA1103"/>
<dbReference type="PATRIC" id="fig|218491.5.peg.1109"/>
<dbReference type="eggNOG" id="COG0703">
    <property type="taxonomic scope" value="Bacteria"/>
</dbReference>
<dbReference type="HOGENOM" id="CLU_057607_4_3_6"/>
<dbReference type="OrthoDB" id="9800332at2"/>
<dbReference type="UniPathway" id="UPA00053">
    <property type="reaction ID" value="UER00088"/>
</dbReference>
<dbReference type="Proteomes" id="UP000007966">
    <property type="component" value="Chromosome"/>
</dbReference>
<dbReference type="GO" id="GO:0005829">
    <property type="term" value="C:cytosol"/>
    <property type="evidence" value="ECO:0007669"/>
    <property type="project" value="TreeGrafter"/>
</dbReference>
<dbReference type="GO" id="GO:0005524">
    <property type="term" value="F:ATP binding"/>
    <property type="evidence" value="ECO:0007669"/>
    <property type="project" value="UniProtKB-UniRule"/>
</dbReference>
<dbReference type="GO" id="GO:0000287">
    <property type="term" value="F:magnesium ion binding"/>
    <property type="evidence" value="ECO:0007669"/>
    <property type="project" value="UniProtKB-UniRule"/>
</dbReference>
<dbReference type="GO" id="GO:0004765">
    <property type="term" value="F:shikimate kinase activity"/>
    <property type="evidence" value="ECO:0007669"/>
    <property type="project" value="UniProtKB-UniRule"/>
</dbReference>
<dbReference type="GO" id="GO:0008652">
    <property type="term" value="P:amino acid biosynthetic process"/>
    <property type="evidence" value="ECO:0007669"/>
    <property type="project" value="UniProtKB-KW"/>
</dbReference>
<dbReference type="GO" id="GO:0009073">
    <property type="term" value="P:aromatic amino acid family biosynthetic process"/>
    <property type="evidence" value="ECO:0007669"/>
    <property type="project" value="UniProtKB-KW"/>
</dbReference>
<dbReference type="GO" id="GO:0009423">
    <property type="term" value="P:chorismate biosynthetic process"/>
    <property type="evidence" value="ECO:0007669"/>
    <property type="project" value="UniProtKB-UniRule"/>
</dbReference>
<dbReference type="CDD" id="cd00464">
    <property type="entry name" value="SK"/>
    <property type="match status" value="1"/>
</dbReference>
<dbReference type="Gene3D" id="3.40.50.300">
    <property type="entry name" value="P-loop containing nucleotide triphosphate hydrolases"/>
    <property type="match status" value="1"/>
</dbReference>
<dbReference type="HAMAP" id="MF_00109">
    <property type="entry name" value="Shikimate_kinase"/>
    <property type="match status" value="1"/>
</dbReference>
<dbReference type="HAMAP" id="MF_01269">
    <property type="entry name" value="Shikimate_kinase_2"/>
    <property type="match status" value="1"/>
</dbReference>
<dbReference type="InterPro" id="IPR027417">
    <property type="entry name" value="P-loop_NTPase"/>
</dbReference>
<dbReference type="InterPro" id="IPR031322">
    <property type="entry name" value="Shikimate/glucono_kinase"/>
</dbReference>
<dbReference type="InterPro" id="IPR000623">
    <property type="entry name" value="Shikimate_kinase/TSH1"/>
</dbReference>
<dbReference type="InterPro" id="IPR027544">
    <property type="entry name" value="Shikimate_kinase_2"/>
</dbReference>
<dbReference type="InterPro" id="IPR023000">
    <property type="entry name" value="Shikimate_kinase_CS"/>
</dbReference>
<dbReference type="NCBIfam" id="NF002988">
    <property type="entry name" value="PRK03731.1"/>
    <property type="match status" value="1"/>
</dbReference>
<dbReference type="PANTHER" id="PTHR21087">
    <property type="entry name" value="SHIKIMATE KINASE"/>
    <property type="match status" value="1"/>
</dbReference>
<dbReference type="PANTHER" id="PTHR21087:SF21">
    <property type="entry name" value="SHIKIMATE KINASE 2"/>
    <property type="match status" value="1"/>
</dbReference>
<dbReference type="Pfam" id="PF01202">
    <property type="entry name" value="SKI"/>
    <property type="match status" value="1"/>
</dbReference>
<dbReference type="PRINTS" id="PR01100">
    <property type="entry name" value="SHIKIMTKNASE"/>
</dbReference>
<dbReference type="SUPFAM" id="SSF52540">
    <property type="entry name" value="P-loop containing nucleoside triphosphate hydrolases"/>
    <property type="match status" value="1"/>
</dbReference>
<dbReference type="PROSITE" id="PS01128">
    <property type="entry name" value="SHIKIMATE_KINASE"/>
    <property type="match status" value="1"/>
</dbReference>
<name>AROL_PECAS</name>
<reference key="1">
    <citation type="journal article" date="2004" name="Proc. Natl. Acad. Sci. U.S.A.">
        <title>Genome sequence of the enterobacterial phytopathogen Erwinia carotovora subsp. atroseptica and characterization of virulence factors.</title>
        <authorList>
            <person name="Bell K.S."/>
            <person name="Sebaihia M."/>
            <person name="Pritchard L."/>
            <person name="Holden M.T.G."/>
            <person name="Hyman L.J."/>
            <person name="Holeva M.C."/>
            <person name="Thomson N.R."/>
            <person name="Bentley S.D."/>
            <person name="Churcher L.J.C."/>
            <person name="Mungall K."/>
            <person name="Atkin R."/>
            <person name="Bason N."/>
            <person name="Brooks K."/>
            <person name="Chillingworth T."/>
            <person name="Clark K."/>
            <person name="Doggett J."/>
            <person name="Fraser A."/>
            <person name="Hance Z."/>
            <person name="Hauser H."/>
            <person name="Jagels K."/>
            <person name="Moule S."/>
            <person name="Norbertczak H."/>
            <person name="Ormond D."/>
            <person name="Price C."/>
            <person name="Quail M.A."/>
            <person name="Sanders M."/>
            <person name="Walker D."/>
            <person name="Whitehead S."/>
            <person name="Salmond G.P.C."/>
            <person name="Birch P.R.J."/>
            <person name="Parkhill J."/>
            <person name="Toth I.K."/>
        </authorList>
    </citation>
    <scope>NUCLEOTIDE SEQUENCE [LARGE SCALE GENOMIC DNA]</scope>
    <source>
        <strain>SCRI 1043 / ATCC BAA-672</strain>
    </source>
</reference>
<organism>
    <name type="scientific">Pectobacterium atrosepticum (strain SCRI 1043 / ATCC BAA-672)</name>
    <name type="common">Erwinia carotovora subsp. atroseptica</name>
    <dbReference type="NCBI Taxonomy" id="218491"/>
    <lineage>
        <taxon>Bacteria</taxon>
        <taxon>Pseudomonadati</taxon>
        <taxon>Pseudomonadota</taxon>
        <taxon>Gammaproteobacteria</taxon>
        <taxon>Enterobacterales</taxon>
        <taxon>Pectobacteriaceae</taxon>
        <taxon>Pectobacterium</taxon>
    </lineage>
</organism>
<evidence type="ECO:0000255" key="1">
    <source>
        <dbReference type="HAMAP-Rule" id="MF_01269"/>
    </source>
</evidence>
<comment type="function">
    <text evidence="1">Catalyzes the specific phosphorylation of the 3-hydroxyl group of shikimic acid using ATP as a cosubstrate.</text>
</comment>
<comment type="catalytic activity">
    <reaction evidence="1">
        <text>shikimate + ATP = 3-phosphoshikimate + ADP + H(+)</text>
        <dbReference type="Rhea" id="RHEA:13121"/>
        <dbReference type="ChEBI" id="CHEBI:15378"/>
        <dbReference type="ChEBI" id="CHEBI:30616"/>
        <dbReference type="ChEBI" id="CHEBI:36208"/>
        <dbReference type="ChEBI" id="CHEBI:145989"/>
        <dbReference type="ChEBI" id="CHEBI:456216"/>
        <dbReference type="EC" id="2.7.1.71"/>
    </reaction>
</comment>
<comment type="cofactor">
    <cofactor evidence="1">
        <name>Mg(2+)</name>
        <dbReference type="ChEBI" id="CHEBI:18420"/>
    </cofactor>
    <text evidence="1">Binds 1 Mg(2+) ion per subunit.</text>
</comment>
<comment type="pathway">
    <text evidence="1">Metabolic intermediate biosynthesis; chorismate biosynthesis; chorismate from D-erythrose 4-phosphate and phosphoenolpyruvate: step 5/7.</text>
</comment>
<comment type="subunit">
    <text evidence="1">Monomer.</text>
</comment>
<comment type="subcellular location">
    <subcellularLocation>
        <location evidence="1">Cytoplasm</location>
    </subcellularLocation>
</comment>
<comment type="domain">
    <text evidence="1">The LID domain closes over the active site upon ATP binding.</text>
</comment>
<comment type="similarity">
    <text evidence="1">Belongs to the shikimate kinase family. AroL subfamily.</text>
</comment>